<accession>Q3LSN5</accession>
<reference key="1">
    <citation type="submission" date="2005-08" db="EMBL/GenBank/DDBJ databases">
        <authorList>
            <person name="Doss R.P."/>
            <person name="Price R.R."/>
        </authorList>
    </citation>
    <scope>NUCLEOTIDE SEQUENCE [MRNA]</scope>
</reference>
<evidence type="ECO:0000255" key="1">
    <source>
        <dbReference type="HAMAP-Rule" id="MF_03128"/>
    </source>
</evidence>
<evidence type="ECO:0000255" key="2">
    <source>
        <dbReference type="PROSITE-ProRule" id="PRU01266"/>
    </source>
</evidence>
<dbReference type="EC" id="2.8.1.8" evidence="1"/>
<dbReference type="EMBL" id="DQ181623">
    <property type="protein sequence ID" value="ABA29155.1"/>
    <property type="molecule type" value="mRNA"/>
</dbReference>
<dbReference type="SMR" id="Q3LSN5"/>
<dbReference type="UniPathway" id="UPA00538">
    <property type="reaction ID" value="UER00593"/>
</dbReference>
<dbReference type="GO" id="GO:0005739">
    <property type="term" value="C:mitochondrion"/>
    <property type="evidence" value="ECO:0007669"/>
    <property type="project" value="UniProtKB-SubCell"/>
</dbReference>
<dbReference type="GO" id="GO:0051539">
    <property type="term" value="F:4 iron, 4 sulfur cluster binding"/>
    <property type="evidence" value="ECO:0007669"/>
    <property type="project" value="UniProtKB-UniRule"/>
</dbReference>
<dbReference type="GO" id="GO:0016992">
    <property type="term" value="F:lipoate synthase activity"/>
    <property type="evidence" value="ECO:0007669"/>
    <property type="project" value="UniProtKB-UniRule"/>
</dbReference>
<dbReference type="GO" id="GO:0046872">
    <property type="term" value="F:metal ion binding"/>
    <property type="evidence" value="ECO:0007669"/>
    <property type="project" value="UniProtKB-KW"/>
</dbReference>
<dbReference type="CDD" id="cd01335">
    <property type="entry name" value="Radical_SAM"/>
    <property type="match status" value="1"/>
</dbReference>
<dbReference type="FunFam" id="3.20.20.70:FF:000125">
    <property type="entry name" value="Lipoyl synthase, mitochondrial"/>
    <property type="match status" value="1"/>
</dbReference>
<dbReference type="Gene3D" id="3.20.20.70">
    <property type="entry name" value="Aldolase class I"/>
    <property type="match status" value="1"/>
</dbReference>
<dbReference type="HAMAP" id="MF_00206">
    <property type="entry name" value="Lipoyl_synth"/>
    <property type="match status" value="1"/>
</dbReference>
<dbReference type="HAMAP" id="MF_03128">
    <property type="entry name" value="Lipoyl_synth_plantM"/>
    <property type="match status" value="1"/>
</dbReference>
<dbReference type="InterPro" id="IPR013785">
    <property type="entry name" value="Aldolase_TIM"/>
</dbReference>
<dbReference type="InterPro" id="IPR006638">
    <property type="entry name" value="Elp3/MiaA/NifB-like_rSAM"/>
</dbReference>
<dbReference type="InterPro" id="IPR031691">
    <property type="entry name" value="LIAS_N"/>
</dbReference>
<dbReference type="InterPro" id="IPR003698">
    <property type="entry name" value="Lipoyl_synth"/>
</dbReference>
<dbReference type="InterPro" id="IPR027527">
    <property type="entry name" value="Lipoyl_synth_mt"/>
</dbReference>
<dbReference type="InterPro" id="IPR007197">
    <property type="entry name" value="rSAM"/>
</dbReference>
<dbReference type="NCBIfam" id="TIGR00510">
    <property type="entry name" value="lipA"/>
    <property type="match status" value="1"/>
</dbReference>
<dbReference type="NCBIfam" id="NF004019">
    <property type="entry name" value="PRK05481.1"/>
    <property type="match status" value="1"/>
</dbReference>
<dbReference type="NCBIfam" id="NF009544">
    <property type="entry name" value="PRK12928.1"/>
    <property type="match status" value="1"/>
</dbReference>
<dbReference type="PANTHER" id="PTHR10949">
    <property type="entry name" value="LIPOYL SYNTHASE"/>
    <property type="match status" value="1"/>
</dbReference>
<dbReference type="PANTHER" id="PTHR10949:SF0">
    <property type="entry name" value="LIPOYL SYNTHASE, MITOCHONDRIAL"/>
    <property type="match status" value="1"/>
</dbReference>
<dbReference type="Pfam" id="PF16881">
    <property type="entry name" value="LIAS_N"/>
    <property type="match status" value="1"/>
</dbReference>
<dbReference type="Pfam" id="PF04055">
    <property type="entry name" value="Radical_SAM"/>
    <property type="match status" value="1"/>
</dbReference>
<dbReference type="PIRSF" id="PIRSF005963">
    <property type="entry name" value="Lipoyl_synth"/>
    <property type="match status" value="1"/>
</dbReference>
<dbReference type="SFLD" id="SFLDF00271">
    <property type="entry name" value="lipoyl_synthase"/>
    <property type="match status" value="1"/>
</dbReference>
<dbReference type="SFLD" id="SFLDS00029">
    <property type="entry name" value="Radical_SAM"/>
    <property type="match status" value="1"/>
</dbReference>
<dbReference type="SMART" id="SM00729">
    <property type="entry name" value="Elp3"/>
    <property type="match status" value="1"/>
</dbReference>
<dbReference type="SUPFAM" id="SSF102114">
    <property type="entry name" value="Radical SAM enzymes"/>
    <property type="match status" value="1"/>
</dbReference>
<dbReference type="PROSITE" id="PS51918">
    <property type="entry name" value="RADICAL_SAM"/>
    <property type="match status" value="1"/>
</dbReference>
<sequence>MMYSRFRTVAGNLNCAAKRLSSSSTTTTTTSAPSELQQNLAALRARLAMESPSLSDFISLKSDNAYSVEVGTKKKPLPKPKWMKESIPGGEKYVQIKKKLRELKLHTVCEEAKCPNLGECWSGGETGTATATIMILGDTCTRGCRFCNVKTSRTPPPPDPDEPTNVAEAIASWGLDYVVITSVDRDDLPDQGSGHFTETVQKLKALKPSMLIEALVPDFRGNAECVEKVSKSGLDVFAHNIETVEELQSAVRDHRANFKQSLDVLMMAKEYAPAGTLTKTSIMLGCGETPDQIVKTMEKVRAAGVDVMTFGQHMRPSKRHMPVSEYITPEAFEKYQTLGMEMGFRYVASGPMVRSSYKAGEFYIKSMIDSDRAASS</sequence>
<feature type="chain" id="PRO_0000398852" description="Lipoyl synthase 2, mitochondrial">
    <location>
        <begin position="1"/>
        <end position="376"/>
    </location>
</feature>
<feature type="domain" description="Radical SAM core" evidence="2">
    <location>
        <begin position="125"/>
        <end position="345"/>
    </location>
</feature>
<feature type="binding site" evidence="1">
    <location>
        <position position="109"/>
    </location>
    <ligand>
        <name>[4Fe-4S] cluster</name>
        <dbReference type="ChEBI" id="CHEBI:49883"/>
        <label>1</label>
    </ligand>
</feature>
<feature type="binding site" evidence="1">
    <location>
        <position position="114"/>
    </location>
    <ligand>
        <name>[4Fe-4S] cluster</name>
        <dbReference type="ChEBI" id="CHEBI:49883"/>
        <label>1</label>
    </ligand>
</feature>
<feature type="binding site" evidence="1">
    <location>
        <position position="120"/>
    </location>
    <ligand>
        <name>[4Fe-4S] cluster</name>
        <dbReference type="ChEBI" id="CHEBI:49883"/>
        <label>1</label>
    </ligand>
</feature>
<feature type="binding site" evidence="1">
    <location>
        <position position="140"/>
    </location>
    <ligand>
        <name>[4Fe-4S] cluster</name>
        <dbReference type="ChEBI" id="CHEBI:49883"/>
        <label>2</label>
        <note>4Fe-4S-S-AdoMet</note>
    </ligand>
</feature>
<feature type="binding site" evidence="1">
    <location>
        <position position="144"/>
    </location>
    <ligand>
        <name>[4Fe-4S] cluster</name>
        <dbReference type="ChEBI" id="CHEBI:49883"/>
        <label>2</label>
        <note>4Fe-4S-S-AdoMet</note>
    </ligand>
</feature>
<feature type="binding site" evidence="1">
    <location>
        <position position="147"/>
    </location>
    <ligand>
        <name>[4Fe-4S] cluster</name>
        <dbReference type="ChEBI" id="CHEBI:49883"/>
        <label>2</label>
        <note>4Fe-4S-S-AdoMet</note>
    </ligand>
</feature>
<feature type="binding site" evidence="1">
    <location>
        <position position="356"/>
    </location>
    <ligand>
        <name>[4Fe-4S] cluster</name>
        <dbReference type="ChEBI" id="CHEBI:49883"/>
        <label>1</label>
    </ligand>
</feature>
<protein>
    <recommendedName>
        <fullName>Lipoyl synthase 2, mitochondrial</fullName>
        <ecNumber evidence="1">2.8.1.8</ecNumber>
    </recommendedName>
    <alternativeName>
        <fullName evidence="1">Lipoate synthase 2</fullName>
        <shortName evidence="1">LS 2</shortName>
        <shortName evidence="1">Lip-syn 2</shortName>
    </alternativeName>
    <alternativeName>
        <fullName evidence="1">Lipoic acid synthase 2</fullName>
    </alternativeName>
</protein>
<organism>
    <name type="scientific">Pisum sativum</name>
    <name type="common">Garden pea</name>
    <name type="synonym">Lathyrus oleraceus</name>
    <dbReference type="NCBI Taxonomy" id="3888"/>
    <lineage>
        <taxon>Eukaryota</taxon>
        <taxon>Viridiplantae</taxon>
        <taxon>Streptophyta</taxon>
        <taxon>Embryophyta</taxon>
        <taxon>Tracheophyta</taxon>
        <taxon>Spermatophyta</taxon>
        <taxon>Magnoliopsida</taxon>
        <taxon>eudicotyledons</taxon>
        <taxon>Gunneridae</taxon>
        <taxon>Pentapetalae</taxon>
        <taxon>rosids</taxon>
        <taxon>fabids</taxon>
        <taxon>Fabales</taxon>
        <taxon>Fabaceae</taxon>
        <taxon>Papilionoideae</taxon>
        <taxon>50 kb inversion clade</taxon>
        <taxon>NPAAA clade</taxon>
        <taxon>Hologalegina</taxon>
        <taxon>IRL clade</taxon>
        <taxon>Fabeae</taxon>
        <taxon>Pisum</taxon>
    </lineage>
</organism>
<keyword id="KW-0004">4Fe-4S</keyword>
<keyword id="KW-0408">Iron</keyword>
<keyword id="KW-0411">Iron-sulfur</keyword>
<keyword id="KW-0479">Metal-binding</keyword>
<keyword id="KW-0496">Mitochondrion</keyword>
<keyword id="KW-0949">S-adenosyl-L-methionine</keyword>
<keyword id="KW-0808">Transferase</keyword>
<proteinExistence type="evidence at transcript level"/>
<comment type="function">
    <text evidence="1">Catalyzes the radical-mediated insertion of two sulfur atoms into the C-6 and C-8 positions of the octanoyl moiety bound to the lipoyl domains of lipoate-dependent enzymes, thereby converting the octanoylated domains into lipoylated derivatives.</text>
</comment>
<comment type="catalytic activity">
    <reaction evidence="1">
        <text>[[Fe-S] cluster scaffold protein carrying a second [4Fe-4S](2+) cluster] + N(6)-octanoyl-L-lysyl-[protein] + 2 oxidized [2Fe-2S]-[ferredoxin] + 2 S-adenosyl-L-methionine + 4 H(+) = [[Fe-S] cluster scaffold protein] + N(6)-[(R)-dihydrolipoyl]-L-lysyl-[protein] + 4 Fe(3+) + 2 hydrogen sulfide + 2 5'-deoxyadenosine + 2 L-methionine + 2 reduced [2Fe-2S]-[ferredoxin]</text>
        <dbReference type="Rhea" id="RHEA:16585"/>
        <dbReference type="Rhea" id="RHEA-COMP:9928"/>
        <dbReference type="Rhea" id="RHEA-COMP:10000"/>
        <dbReference type="Rhea" id="RHEA-COMP:10001"/>
        <dbReference type="Rhea" id="RHEA-COMP:10475"/>
        <dbReference type="Rhea" id="RHEA-COMP:14568"/>
        <dbReference type="Rhea" id="RHEA-COMP:14569"/>
        <dbReference type="ChEBI" id="CHEBI:15378"/>
        <dbReference type="ChEBI" id="CHEBI:17319"/>
        <dbReference type="ChEBI" id="CHEBI:29034"/>
        <dbReference type="ChEBI" id="CHEBI:29919"/>
        <dbReference type="ChEBI" id="CHEBI:33722"/>
        <dbReference type="ChEBI" id="CHEBI:33737"/>
        <dbReference type="ChEBI" id="CHEBI:33738"/>
        <dbReference type="ChEBI" id="CHEBI:57844"/>
        <dbReference type="ChEBI" id="CHEBI:59789"/>
        <dbReference type="ChEBI" id="CHEBI:78809"/>
        <dbReference type="ChEBI" id="CHEBI:83100"/>
        <dbReference type="EC" id="2.8.1.8"/>
    </reaction>
</comment>
<comment type="cofactor">
    <cofactor evidence="1">
        <name>[4Fe-4S] cluster</name>
        <dbReference type="ChEBI" id="CHEBI:49883"/>
    </cofactor>
    <text evidence="1">Binds 2 [4Fe-4S] clusters per subunit. One cluster is coordinated with 3 cysteines and an exchangeable S-adenosyl-L-methionine.</text>
</comment>
<comment type="pathway">
    <text evidence="1">Protein modification; protein lipoylation via endogenous pathway; protein N(6)-(lipoyl)lysine from octanoyl-[acyl-carrier-protein]: step 2/2.</text>
</comment>
<comment type="subcellular location">
    <subcellularLocation>
        <location evidence="1">Mitochondrion</location>
    </subcellularLocation>
</comment>
<comment type="miscellaneous">
    <text evidence="1">This protein may be expected to contain an N-terminal transit peptide but none has been predicted.</text>
</comment>
<comment type="similarity">
    <text evidence="1">Belongs to the radical SAM superfamily. Lipoyl synthase family.</text>
</comment>
<gene>
    <name evidence="1" type="primary">LIP1-2</name>
</gene>
<name>LIAS2_PEA</name>